<reference key="1">
    <citation type="journal article" date="1995" name="Fish. Sci.">
        <title>Sequences of cDNA clones encoding alpha-actin of carp and goldfish skeletal muscles.</title>
        <authorList>
            <person name="Watabe S."/>
            <person name="Hirayama Y."/>
            <person name="Imai J."/>
            <person name="Kikuchi K."/>
            <person name="Yamashita M."/>
        </authorList>
    </citation>
    <scope>NUCLEOTIDE SEQUENCE [MRNA]</scope>
    <source>
        <tissue>Fast-twitch skeletal muscle</tissue>
    </source>
</reference>
<evidence type="ECO:0000250" key="1">
    <source>
        <dbReference type="UniProtKB" id="P62737"/>
    </source>
</evidence>
<evidence type="ECO:0000250" key="2">
    <source>
        <dbReference type="UniProtKB" id="P68133"/>
    </source>
</evidence>
<evidence type="ECO:0000250" key="3">
    <source>
        <dbReference type="UniProtKB" id="P68134"/>
    </source>
</evidence>
<evidence type="ECO:0000250" key="4">
    <source>
        <dbReference type="UniProtKB" id="P68135"/>
    </source>
</evidence>
<evidence type="ECO:0000250" key="5">
    <source>
        <dbReference type="UniProtKB" id="P68137"/>
    </source>
</evidence>
<evidence type="ECO:0000305" key="6"/>
<comment type="function">
    <text>Actins are highly conserved proteins that are involved in various types of cell motility and are ubiquitously expressed in all eukaryotic cells.</text>
</comment>
<comment type="catalytic activity">
    <reaction evidence="5">
        <text>ATP + H2O = ADP + phosphate + H(+)</text>
        <dbReference type="Rhea" id="RHEA:13065"/>
        <dbReference type="ChEBI" id="CHEBI:15377"/>
        <dbReference type="ChEBI" id="CHEBI:15378"/>
        <dbReference type="ChEBI" id="CHEBI:30616"/>
        <dbReference type="ChEBI" id="CHEBI:43474"/>
        <dbReference type="ChEBI" id="CHEBI:456216"/>
    </reaction>
</comment>
<comment type="subunit">
    <text>Polymerization of globular actin (G-actin) leads to a structural filament (F-actin) in the form of a two-stranded helix. Each actin can bind to 4 others.</text>
</comment>
<comment type="subcellular location">
    <subcellularLocation>
        <location>Cytoplasm</location>
        <location>Cytoskeleton</location>
    </subcellularLocation>
</comment>
<comment type="PTM">
    <molecule>Actin, alpha skeletal muscle, intermediate form</molecule>
    <text evidence="3">N-terminal cleavage of acetylated cysteine of intermediate muscle actin by ACTMAP.</text>
</comment>
<comment type="PTM">
    <text evidence="3">Oxidation of Met-46 and Met-49 by MICALs (MICAL1, MICAL2 or MICAL3) to form methionine sulfoxide promotes actin filament depolymerization. MICAL1 and MICAL2 produce the (R)-S-oxide form. The (R)-S-oxide form is reverted by MSRB1 and MSRB2, which promotes actin repolymerization.</text>
</comment>
<comment type="PTM">
    <text evidence="2">Monomethylation at Lys-86 (K84me1) regulates actin-myosin interaction and actomyosin-dependent processes. Demethylation by ALKBH4 is required for maintaining actomyosin dynamics supporting normal cleavage furrow ingression during cytokinesis and cell migration.</text>
</comment>
<comment type="PTM">
    <text evidence="2">Methylated at His-75 by SETD3.</text>
</comment>
<comment type="miscellaneous">
    <text>In vertebrates 3 main groups of actin isoforms, alpha, beta and gamma have been identified. The alpha actins are found in muscle tissues and are a major constituent of the contractile apparatus. The beta and gamma actins coexist in most cell types as components of the cytoskeleton and as mediators of internal cell motility.</text>
</comment>
<comment type="similarity">
    <text evidence="6">Belongs to the actin family.</text>
</comment>
<accession>P53479</accession>
<sequence>MCDDDETTALVCDNGSGLVKAGFAGDDAPRAVFPSIVGRPRHQGVMVGMGQKDSYVGDEAQSKRGILTLKYPIEHGIITNWDDMEKIWHHTFYNELRVAPEEHPTLLTEAPLNPKANREKMTQIMFETFNVPAMYVAIQAVLSLYASGRTTGIVLDAGDGVTHNVPVYEGYALPHAIMRLDLAGRDLTDYLMKILTERGYSFVTTAEREIVRDIKEKLCYVALDFENEMATAASSSSLEKSYELPDGQVITIGNERFRCPETLFQPSFIGMESAGIHETAYNSIMKCDIDIRKDLYANNVLSGGTTMYPGIADRMQKEITALAPSTMKIKIIAPPERKYSVWIGGSILASLSTFQQMWITKQEYDEAGPSIVHRKCF</sequence>
<organism>
    <name type="scientific">Cyprinus carpio</name>
    <name type="common">Common carp</name>
    <dbReference type="NCBI Taxonomy" id="7962"/>
    <lineage>
        <taxon>Eukaryota</taxon>
        <taxon>Metazoa</taxon>
        <taxon>Chordata</taxon>
        <taxon>Craniata</taxon>
        <taxon>Vertebrata</taxon>
        <taxon>Euteleostomi</taxon>
        <taxon>Actinopterygii</taxon>
        <taxon>Neopterygii</taxon>
        <taxon>Teleostei</taxon>
        <taxon>Ostariophysi</taxon>
        <taxon>Cypriniformes</taxon>
        <taxon>Cyprinidae</taxon>
        <taxon>Cyprininae</taxon>
        <taxon>Cyprinus</taxon>
    </lineage>
</organism>
<feature type="initiator methionine" description="Removed">
    <location>
        <position position="1"/>
    </location>
</feature>
<feature type="chain" id="PRO_0000442821" description="Actin, alpha skeletal muscle, intermediate form" evidence="1">
    <location>
        <begin position="2"/>
        <end position="377"/>
    </location>
</feature>
<feature type="chain" id="PRO_0000442822" description="Actin, alpha skeletal muscle" evidence="1">
    <location>
        <begin position="3"/>
        <end position="377"/>
    </location>
</feature>
<feature type="modified residue" description="N-acetylcysteine; in intermediate form" evidence="1">
    <location>
        <position position="2"/>
    </location>
</feature>
<feature type="modified residue" description="N-acetylaspartate; in Actin, alpha skeletal muscle" evidence="4">
    <location>
        <position position="3"/>
    </location>
</feature>
<feature type="modified residue" description="Methionine (R)-sulfoxide" evidence="3">
    <location>
        <position position="46"/>
    </location>
</feature>
<feature type="modified residue" description="Methionine (R)-sulfoxide" evidence="3">
    <location>
        <position position="49"/>
    </location>
</feature>
<feature type="modified residue" description="Tele-methylhistidine" evidence="4">
    <location>
        <position position="75"/>
    </location>
</feature>
<feature type="modified residue" description="N6-methyllysine" evidence="2">
    <location>
        <position position="86"/>
    </location>
</feature>
<keyword id="KW-0007">Acetylation</keyword>
<keyword id="KW-0067">ATP-binding</keyword>
<keyword id="KW-0963">Cytoplasm</keyword>
<keyword id="KW-0206">Cytoskeleton</keyword>
<keyword id="KW-0378">Hydrolase</keyword>
<keyword id="KW-0488">Methylation</keyword>
<keyword id="KW-0514">Muscle protein</keyword>
<keyword id="KW-0547">Nucleotide-binding</keyword>
<keyword id="KW-0558">Oxidation</keyword>
<keyword id="KW-1185">Reference proteome</keyword>
<gene>
    <name type="primary">acta1</name>
</gene>
<dbReference type="EC" id="3.6.4.-" evidence="5"/>
<dbReference type="EMBL" id="D50028">
    <property type="protein sequence ID" value="BAA08755.1"/>
    <property type="molecule type" value="mRNA"/>
</dbReference>
<dbReference type="RefSeq" id="XP_018977009.1">
    <property type="nucleotide sequence ID" value="XM_019121464.1"/>
</dbReference>
<dbReference type="SMR" id="P53479"/>
<dbReference type="Ensembl" id="ENSCCRT00010110925.1">
    <property type="protein sequence ID" value="ENSCCRP00010099969.1"/>
    <property type="gene ID" value="ENSCCRG00010043870.1"/>
</dbReference>
<dbReference type="KEGG" id="ccar:109108280"/>
<dbReference type="OMA" id="CPENAGI"/>
<dbReference type="OrthoDB" id="6953074at2759"/>
<dbReference type="Proteomes" id="UP000694384">
    <property type="component" value="Unplaced"/>
</dbReference>
<dbReference type="Proteomes" id="UP000694427">
    <property type="component" value="Unplaced"/>
</dbReference>
<dbReference type="Proteomes" id="UP000694700">
    <property type="component" value="Unplaced"/>
</dbReference>
<dbReference type="Proteomes" id="UP000694701">
    <property type="component" value="Unplaced"/>
</dbReference>
<dbReference type="Proteomes" id="UP001155660">
    <property type="component" value="Unplaced"/>
</dbReference>
<dbReference type="GO" id="GO:0005737">
    <property type="term" value="C:cytoplasm"/>
    <property type="evidence" value="ECO:0007669"/>
    <property type="project" value="UniProtKB-KW"/>
</dbReference>
<dbReference type="GO" id="GO:0005856">
    <property type="term" value="C:cytoskeleton"/>
    <property type="evidence" value="ECO:0007669"/>
    <property type="project" value="UniProtKB-SubCell"/>
</dbReference>
<dbReference type="GO" id="GO:0005524">
    <property type="term" value="F:ATP binding"/>
    <property type="evidence" value="ECO:0007669"/>
    <property type="project" value="UniProtKB-KW"/>
</dbReference>
<dbReference type="GO" id="GO:0016787">
    <property type="term" value="F:hydrolase activity"/>
    <property type="evidence" value="ECO:0007669"/>
    <property type="project" value="UniProtKB-KW"/>
</dbReference>
<dbReference type="CDD" id="cd10224">
    <property type="entry name" value="ASKHA_NBD_actin"/>
    <property type="match status" value="1"/>
</dbReference>
<dbReference type="FunFam" id="3.30.420.40:FF:000131">
    <property type="entry name" value="Actin, alpha skeletal muscle"/>
    <property type="match status" value="1"/>
</dbReference>
<dbReference type="FunFam" id="3.30.420.40:FF:000291">
    <property type="entry name" value="Actin, alpha skeletal muscle"/>
    <property type="match status" value="1"/>
</dbReference>
<dbReference type="FunFam" id="3.90.640.10:FF:000047">
    <property type="entry name" value="Actin, alpha skeletal muscle"/>
    <property type="match status" value="1"/>
</dbReference>
<dbReference type="FunFam" id="3.30.420.40:FF:000058">
    <property type="entry name" value="Putative actin-related protein 5"/>
    <property type="match status" value="1"/>
</dbReference>
<dbReference type="Gene3D" id="3.30.420.40">
    <property type="match status" value="2"/>
</dbReference>
<dbReference type="Gene3D" id="3.90.640.10">
    <property type="entry name" value="Actin, Chain A, domain 4"/>
    <property type="match status" value="1"/>
</dbReference>
<dbReference type="InterPro" id="IPR004000">
    <property type="entry name" value="Actin"/>
</dbReference>
<dbReference type="InterPro" id="IPR020902">
    <property type="entry name" value="Actin/actin-like_CS"/>
</dbReference>
<dbReference type="InterPro" id="IPR004001">
    <property type="entry name" value="Actin_CS"/>
</dbReference>
<dbReference type="InterPro" id="IPR043129">
    <property type="entry name" value="ATPase_NBD"/>
</dbReference>
<dbReference type="PANTHER" id="PTHR11937">
    <property type="entry name" value="ACTIN"/>
    <property type="match status" value="1"/>
</dbReference>
<dbReference type="Pfam" id="PF00022">
    <property type="entry name" value="Actin"/>
    <property type="match status" value="1"/>
</dbReference>
<dbReference type="PRINTS" id="PR00190">
    <property type="entry name" value="ACTIN"/>
</dbReference>
<dbReference type="SMART" id="SM00268">
    <property type="entry name" value="ACTIN"/>
    <property type="match status" value="1"/>
</dbReference>
<dbReference type="SUPFAM" id="SSF53067">
    <property type="entry name" value="Actin-like ATPase domain"/>
    <property type="match status" value="2"/>
</dbReference>
<dbReference type="PROSITE" id="PS00406">
    <property type="entry name" value="ACTINS_1"/>
    <property type="match status" value="1"/>
</dbReference>
<dbReference type="PROSITE" id="PS00432">
    <property type="entry name" value="ACTINS_2"/>
    <property type="match status" value="1"/>
</dbReference>
<dbReference type="PROSITE" id="PS01132">
    <property type="entry name" value="ACTINS_ACT_LIKE"/>
    <property type="match status" value="1"/>
</dbReference>
<proteinExistence type="evidence at transcript level"/>
<name>ACTS_CYPCA</name>
<protein>
    <recommendedName>
        <fullName>Actin, alpha skeletal muscle</fullName>
        <ecNumber evidence="5">3.6.4.-</ecNumber>
    </recommendedName>
    <alternativeName>
        <fullName>Alpha-actin-1</fullName>
    </alternativeName>
    <component>
        <recommendedName>
            <fullName>Actin, alpha skeletal muscle, intermediate form</fullName>
        </recommendedName>
    </component>
</protein>